<sequence length="159" mass="18127">MAGISSARLSEERKNWRRDHPYGFFARPSTNTDGSLNLYVWNCGIPGKTKTNWEGGVYPLIMEFTEDYPSKPPKCRFPKDFFHPNVYPSGTVCLSILNEEADWKPSVTIKTVLLGIQDLLDNPNPKSPAQQLPIHLFLTNKEEYDKKVKAQSKVYPPPQ</sequence>
<evidence type="ECO:0000250" key="1"/>
<evidence type="ECO:0000255" key="2">
    <source>
        <dbReference type="PROSITE-ProRule" id="PRU00388"/>
    </source>
</evidence>
<evidence type="ECO:0000255" key="3">
    <source>
        <dbReference type="PROSITE-ProRule" id="PRU10133"/>
    </source>
</evidence>
<name>UBC9_DICDI</name>
<organism>
    <name type="scientific">Dictyostelium discoideum</name>
    <name type="common">Social amoeba</name>
    <dbReference type="NCBI Taxonomy" id="44689"/>
    <lineage>
        <taxon>Eukaryota</taxon>
        <taxon>Amoebozoa</taxon>
        <taxon>Evosea</taxon>
        <taxon>Eumycetozoa</taxon>
        <taxon>Dictyostelia</taxon>
        <taxon>Dictyosteliales</taxon>
        <taxon>Dictyosteliaceae</taxon>
        <taxon>Dictyostelium</taxon>
    </lineage>
</organism>
<keyword id="KW-0067">ATP-binding</keyword>
<keyword id="KW-0547">Nucleotide-binding</keyword>
<keyword id="KW-0539">Nucleus</keyword>
<keyword id="KW-1185">Reference proteome</keyword>
<keyword id="KW-0808">Transferase</keyword>
<keyword id="KW-0833">Ubl conjugation pathway</keyword>
<comment type="function">
    <text>Accepts the ubiquitin-like protein sumo from the E1 complex and catalyzes its covalent attachment to other proteins with the help of an E3 ligase.</text>
</comment>
<comment type="pathway">
    <text>Protein modification; protein sumoylation.</text>
</comment>
<comment type="subcellular location">
    <subcellularLocation>
        <location evidence="1">Nucleus</location>
    </subcellularLocation>
</comment>
<comment type="similarity">
    <text evidence="2">Belongs to the ubiquitin-conjugating enzyme family.</text>
</comment>
<dbReference type="EC" id="2.3.2.-"/>
<dbReference type="EMBL" id="AF246690">
    <property type="protein sequence ID" value="AAF65153.1"/>
    <property type="molecule type" value="Genomic_DNA"/>
</dbReference>
<dbReference type="EMBL" id="AAFI02000104">
    <property type="protein sequence ID" value="EAL63493.1"/>
    <property type="molecule type" value="Genomic_DNA"/>
</dbReference>
<dbReference type="RefSeq" id="XP_637050.1">
    <property type="nucleotide sequence ID" value="XM_631958.1"/>
</dbReference>
<dbReference type="SMR" id="Q9NGP4"/>
<dbReference type="FunCoup" id="Q9NGP4">
    <property type="interactions" value="1391"/>
</dbReference>
<dbReference type="STRING" id="44689.Q9NGP4"/>
<dbReference type="PaxDb" id="44689-DDB0191440"/>
<dbReference type="EnsemblProtists" id="EAL63493">
    <property type="protein sequence ID" value="EAL63493"/>
    <property type="gene ID" value="DDB_G0287693"/>
</dbReference>
<dbReference type="GeneID" id="8626304"/>
<dbReference type="KEGG" id="ddi:DDB_G0287693"/>
<dbReference type="dictyBase" id="DDB_G0287693">
    <property type="gene designation" value="ubc9"/>
</dbReference>
<dbReference type="VEuPathDB" id="AmoebaDB:DDB_G0287693"/>
<dbReference type="eggNOG" id="KOG0424">
    <property type="taxonomic scope" value="Eukaryota"/>
</dbReference>
<dbReference type="HOGENOM" id="CLU_030988_12_0_1"/>
<dbReference type="InParanoid" id="Q9NGP4"/>
<dbReference type="OMA" id="TWECGIP"/>
<dbReference type="PhylomeDB" id="Q9NGP4"/>
<dbReference type="Reactome" id="R-DDI-3065678">
    <property type="pathway name" value="SUMO is transferred from E1 to E2 (UBE2I, UBC9)"/>
</dbReference>
<dbReference type="Reactome" id="R-DDI-3108214">
    <property type="pathway name" value="SUMOylation of DNA damage response and repair proteins"/>
</dbReference>
<dbReference type="Reactome" id="R-DDI-3899300">
    <property type="pathway name" value="SUMOylation of transcription cofactors"/>
</dbReference>
<dbReference type="Reactome" id="R-DDI-4085377">
    <property type="pathway name" value="SUMOylation of SUMOylation proteins"/>
</dbReference>
<dbReference type="Reactome" id="R-DDI-4551638">
    <property type="pathway name" value="SUMOylation of chromatin organization proteins"/>
</dbReference>
<dbReference type="Reactome" id="R-DDI-4570464">
    <property type="pathway name" value="SUMOylation of RNA binding proteins"/>
</dbReference>
<dbReference type="Reactome" id="R-DDI-4615885">
    <property type="pathway name" value="SUMOylation of DNA replication proteins"/>
</dbReference>
<dbReference type="UniPathway" id="UPA00886"/>
<dbReference type="PRO" id="PR:Q9NGP4"/>
<dbReference type="Proteomes" id="UP000002195">
    <property type="component" value="Chromosome 5"/>
</dbReference>
<dbReference type="GO" id="GO:0005634">
    <property type="term" value="C:nucleus"/>
    <property type="evidence" value="ECO:0000318"/>
    <property type="project" value="GO_Central"/>
</dbReference>
<dbReference type="GO" id="GO:0005524">
    <property type="term" value="F:ATP binding"/>
    <property type="evidence" value="ECO:0007669"/>
    <property type="project" value="UniProtKB-KW"/>
</dbReference>
<dbReference type="GO" id="GO:0061656">
    <property type="term" value="F:SUMO conjugating enzyme activity"/>
    <property type="evidence" value="ECO:0000318"/>
    <property type="project" value="GO_Central"/>
</dbReference>
<dbReference type="GO" id="GO:0016925">
    <property type="term" value="P:protein sumoylation"/>
    <property type="evidence" value="ECO:0000318"/>
    <property type="project" value="GO_Central"/>
</dbReference>
<dbReference type="CDD" id="cd23798">
    <property type="entry name" value="UBCc_UBE2I"/>
    <property type="match status" value="1"/>
</dbReference>
<dbReference type="FunFam" id="3.10.110.10:FF:000035">
    <property type="entry name" value="SUMO-conjugating enzyme ubc9"/>
    <property type="match status" value="1"/>
</dbReference>
<dbReference type="Gene3D" id="3.10.110.10">
    <property type="entry name" value="Ubiquitin Conjugating Enzyme"/>
    <property type="match status" value="1"/>
</dbReference>
<dbReference type="InterPro" id="IPR050113">
    <property type="entry name" value="Ub_conjugating_enzyme"/>
</dbReference>
<dbReference type="InterPro" id="IPR000608">
    <property type="entry name" value="UBQ-conjugat_E2_core"/>
</dbReference>
<dbReference type="InterPro" id="IPR023313">
    <property type="entry name" value="UBQ-conjugating_AS"/>
</dbReference>
<dbReference type="InterPro" id="IPR016135">
    <property type="entry name" value="UBQ-conjugating_enzyme/RWD"/>
</dbReference>
<dbReference type="PANTHER" id="PTHR24067">
    <property type="entry name" value="UBIQUITIN-CONJUGATING ENZYME E2"/>
    <property type="match status" value="1"/>
</dbReference>
<dbReference type="Pfam" id="PF00179">
    <property type="entry name" value="UQ_con"/>
    <property type="match status" value="1"/>
</dbReference>
<dbReference type="SMART" id="SM00212">
    <property type="entry name" value="UBCc"/>
    <property type="match status" value="1"/>
</dbReference>
<dbReference type="SUPFAM" id="SSF54495">
    <property type="entry name" value="UBC-like"/>
    <property type="match status" value="1"/>
</dbReference>
<dbReference type="PROSITE" id="PS00183">
    <property type="entry name" value="UBC_1"/>
    <property type="match status" value="1"/>
</dbReference>
<dbReference type="PROSITE" id="PS50127">
    <property type="entry name" value="UBC_2"/>
    <property type="match status" value="1"/>
</dbReference>
<gene>
    <name type="primary">ubc9</name>
    <name type="ORF">DDB_G0287693</name>
</gene>
<reference key="1">
    <citation type="submission" date="2000-03" db="EMBL/GenBank/DDBJ databases">
        <title>The Dictyostelium homolog of ubc9.</title>
        <authorList>
            <person name="Franke J."/>
            <person name="Volino P.A."/>
            <person name="Kessin R.H."/>
        </authorList>
    </citation>
    <scope>NUCLEOTIDE SEQUENCE [GENOMIC DNA]</scope>
</reference>
<reference key="2">
    <citation type="journal article" date="2005" name="Nature">
        <title>The genome of the social amoeba Dictyostelium discoideum.</title>
        <authorList>
            <person name="Eichinger L."/>
            <person name="Pachebat J.A."/>
            <person name="Gloeckner G."/>
            <person name="Rajandream M.A."/>
            <person name="Sucgang R."/>
            <person name="Berriman M."/>
            <person name="Song J."/>
            <person name="Olsen R."/>
            <person name="Szafranski K."/>
            <person name="Xu Q."/>
            <person name="Tunggal B."/>
            <person name="Kummerfeld S."/>
            <person name="Madera M."/>
            <person name="Konfortov B.A."/>
            <person name="Rivero F."/>
            <person name="Bankier A.T."/>
            <person name="Lehmann R."/>
            <person name="Hamlin N."/>
            <person name="Davies R."/>
            <person name="Gaudet P."/>
            <person name="Fey P."/>
            <person name="Pilcher K."/>
            <person name="Chen G."/>
            <person name="Saunders D."/>
            <person name="Sodergren E.J."/>
            <person name="Davis P."/>
            <person name="Kerhornou A."/>
            <person name="Nie X."/>
            <person name="Hall N."/>
            <person name="Anjard C."/>
            <person name="Hemphill L."/>
            <person name="Bason N."/>
            <person name="Farbrother P."/>
            <person name="Desany B."/>
            <person name="Just E."/>
            <person name="Morio T."/>
            <person name="Rost R."/>
            <person name="Churcher C.M."/>
            <person name="Cooper J."/>
            <person name="Haydock S."/>
            <person name="van Driessche N."/>
            <person name="Cronin A."/>
            <person name="Goodhead I."/>
            <person name="Muzny D.M."/>
            <person name="Mourier T."/>
            <person name="Pain A."/>
            <person name="Lu M."/>
            <person name="Harper D."/>
            <person name="Lindsay R."/>
            <person name="Hauser H."/>
            <person name="James K.D."/>
            <person name="Quiles M."/>
            <person name="Madan Babu M."/>
            <person name="Saito T."/>
            <person name="Buchrieser C."/>
            <person name="Wardroper A."/>
            <person name="Felder M."/>
            <person name="Thangavelu M."/>
            <person name="Johnson D."/>
            <person name="Knights A."/>
            <person name="Loulseged H."/>
            <person name="Mungall K.L."/>
            <person name="Oliver K."/>
            <person name="Price C."/>
            <person name="Quail M.A."/>
            <person name="Urushihara H."/>
            <person name="Hernandez J."/>
            <person name="Rabbinowitsch E."/>
            <person name="Steffen D."/>
            <person name="Sanders M."/>
            <person name="Ma J."/>
            <person name="Kohara Y."/>
            <person name="Sharp S."/>
            <person name="Simmonds M.N."/>
            <person name="Spiegler S."/>
            <person name="Tivey A."/>
            <person name="Sugano S."/>
            <person name="White B."/>
            <person name="Walker D."/>
            <person name="Woodward J.R."/>
            <person name="Winckler T."/>
            <person name="Tanaka Y."/>
            <person name="Shaulsky G."/>
            <person name="Schleicher M."/>
            <person name="Weinstock G.M."/>
            <person name="Rosenthal A."/>
            <person name="Cox E.C."/>
            <person name="Chisholm R.L."/>
            <person name="Gibbs R.A."/>
            <person name="Loomis W.F."/>
            <person name="Platzer M."/>
            <person name="Kay R.R."/>
            <person name="Williams J.G."/>
            <person name="Dear P.H."/>
            <person name="Noegel A.A."/>
            <person name="Barrell B.G."/>
            <person name="Kuspa A."/>
        </authorList>
    </citation>
    <scope>NUCLEOTIDE SEQUENCE [LARGE SCALE GENOMIC DNA]</scope>
    <source>
        <strain>AX4</strain>
    </source>
</reference>
<protein>
    <recommendedName>
        <fullName>Sumo-conjugating enzyme ubc9</fullName>
        <ecNumber>2.3.2.-</ecNumber>
    </recommendedName>
    <alternativeName>
        <fullName>Ubiquitin carrier protein 9</fullName>
    </alternativeName>
</protein>
<proteinExistence type="inferred from homology"/>
<feature type="chain" id="PRO_0000327848" description="Sumo-conjugating enzyme ubc9">
    <location>
        <begin position="1"/>
        <end position="159"/>
    </location>
</feature>
<feature type="domain" description="UBC core" evidence="2">
    <location>
        <begin position="4"/>
        <end position="157"/>
    </location>
</feature>
<feature type="active site" description="Glycyl thioester intermediate" evidence="2 3">
    <location>
        <position position="93"/>
    </location>
</feature>
<accession>Q9NGP4</accession>
<accession>Q54JV2</accession>